<dbReference type="EC" id="2.5.1.-" evidence="1"/>
<dbReference type="EMBL" id="AAFI02000102">
    <property type="protein sequence ID" value="EAL63654.1"/>
    <property type="molecule type" value="Genomic_DNA"/>
</dbReference>
<dbReference type="RefSeq" id="XP_637156.1">
    <property type="nucleotide sequence ID" value="XM_632064.1"/>
</dbReference>
<dbReference type="SMR" id="Q54K99"/>
<dbReference type="FunCoup" id="Q54K99">
    <property type="interactions" value="8"/>
</dbReference>
<dbReference type="STRING" id="44689.Q54K99"/>
<dbReference type="PaxDb" id="44689-DDB0231539"/>
<dbReference type="EnsemblProtists" id="EAL63654">
    <property type="protein sequence ID" value="EAL63654"/>
    <property type="gene ID" value="DDB_G0287509"/>
</dbReference>
<dbReference type="GeneID" id="8626157"/>
<dbReference type="KEGG" id="ddi:DDB_G0287509"/>
<dbReference type="dictyBase" id="DDB_G0287509"/>
<dbReference type="VEuPathDB" id="AmoebaDB:DDB_G0287509"/>
<dbReference type="eggNOG" id="KOG4581">
    <property type="taxonomic scope" value="Eukaryota"/>
</dbReference>
<dbReference type="HOGENOM" id="CLU_043611_0_0_1"/>
<dbReference type="InParanoid" id="Q54K99"/>
<dbReference type="OMA" id="QWIEGAR"/>
<dbReference type="PhylomeDB" id="Q54K99"/>
<dbReference type="Reactome" id="R-DDI-6806664">
    <property type="pathway name" value="Metabolism of vitamin K"/>
</dbReference>
<dbReference type="UniPathway" id="UPA00079"/>
<dbReference type="PRO" id="PR:Q54K99"/>
<dbReference type="Proteomes" id="UP000002195">
    <property type="component" value="Chromosome 5"/>
</dbReference>
<dbReference type="GO" id="GO:0005789">
    <property type="term" value="C:endoplasmic reticulum membrane"/>
    <property type="evidence" value="ECO:0007669"/>
    <property type="project" value="UniProtKB-SubCell"/>
</dbReference>
<dbReference type="GO" id="GO:0000139">
    <property type="term" value="C:Golgi membrane"/>
    <property type="evidence" value="ECO:0007669"/>
    <property type="project" value="UniProtKB-SubCell"/>
</dbReference>
<dbReference type="GO" id="GO:0004659">
    <property type="term" value="F:prenyltransferase activity"/>
    <property type="evidence" value="ECO:0000318"/>
    <property type="project" value="GO_Central"/>
</dbReference>
<dbReference type="GO" id="GO:0009234">
    <property type="term" value="P:menaquinone biosynthetic process"/>
    <property type="evidence" value="ECO:0000318"/>
    <property type="project" value="GO_Central"/>
</dbReference>
<dbReference type="GO" id="GO:0042371">
    <property type="term" value="P:vitamin K biosynthetic process"/>
    <property type="evidence" value="ECO:0000318"/>
    <property type="project" value="GO_Central"/>
</dbReference>
<dbReference type="CDD" id="cd13962">
    <property type="entry name" value="PT_UbiA_UBIAD1"/>
    <property type="match status" value="1"/>
</dbReference>
<dbReference type="InterPro" id="IPR000537">
    <property type="entry name" value="UbiA_prenyltransferase"/>
</dbReference>
<dbReference type="InterPro" id="IPR026046">
    <property type="entry name" value="UBIAD1"/>
</dbReference>
<dbReference type="PANTHER" id="PTHR13929">
    <property type="entry name" value="1,4-DIHYDROXY-2-NAPHTHOATE OCTAPRENYLTRANSFERASE"/>
    <property type="match status" value="1"/>
</dbReference>
<dbReference type="PANTHER" id="PTHR13929:SF0">
    <property type="entry name" value="UBIA PRENYLTRANSFERASE DOMAIN-CONTAINING PROTEIN 1"/>
    <property type="match status" value="1"/>
</dbReference>
<dbReference type="Pfam" id="PF01040">
    <property type="entry name" value="UbiA"/>
    <property type="match status" value="1"/>
</dbReference>
<dbReference type="PIRSF" id="PIRSF005355">
    <property type="entry name" value="UBIAD1"/>
    <property type="match status" value="1"/>
</dbReference>
<gene>
    <name type="primary">ubiad1</name>
    <name type="ORF">DDB_G0287509</name>
</gene>
<organism>
    <name type="scientific">Dictyostelium discoideum</name>
    <name type="common">Social amoeba</name>
    <dbReference type="NCBI Taxonomy" id="44689"/>
    <lineage>
        <taxon>Eukaryota</taxon>
        <taxon>Amoebozoa</taxon>
        <taxon>Evosea</taxon>
        <taxon>Eumycetozoa</taxon>
        <taxon>Dictyostelia</taxon>
        <taxon>Dictyosteliales</taxon>
        <taxon>Dictyosteliaceae</taxon>
        <taxon>Dictyostelium</taxon>
    </lineage>
</organism>
<evidence type="ECO:0000250" key="1">
    <source>
        <dbReference type="UniProtKB" id="Q9Y5Z9"/>
    </source>
</evidence>
<evidence type="ECO:0000255" key="2"/>
<evidence type="ECO:0000305" key="3"/>
<proteinExistence type="inferred from homology"/>
<protein>
    <recommendedName>
        <fullName>UbiA prenyltransferase domain-containing protein 1</fullName>
        <ecNumber evidence="1">2.5.1.-</ecNumber>
    </recommendedName>
</protein>
<feature type="chain" id="PRO_0000327579" description="UbiA prenyltransferase domain-containing protein 1">
    <location>
        <begin position="1"/>
        <end position="330"/>
    </location>
</feature>
<feature type="transmembrane region" description="Helical" evidence="2">
    <location>
        <begin position="39"/>
        <end position="59"/>
    </location>
</feature>
<feature type="transmembrane region" description="Helical" evidence="2">
    <location>
        <begin position="73"/>
        <end position="93"/>
    </location>
</feature>
<feature type="transmembrane region" description="Helical" evidence="2">
    <location>
        <begin position="124"/>
        <end position="144"/>
    </location>
</feature>
<feature type="transmembrane region" description="Helical" evidence="2">
    <location>
        <begin position="156"/>
        <end position="176"/>
    </location>
</feature>
<feature type="transmembrane region" description="Helical" evidence="2">
    <location>
        <begin position="180"/>
        <end position="200"/>
    </location>
</feature>
<feature type="transmembrane region" description="Helical" evidence="2">
    <location>
        <begin position="209"/>
        <end position="229"/>
    </location>
</feature>
<feature type="transmembrane region" description="Helical" evidence="2">
    <location>
        <begin position="254"/>
        <end position="274"/>
    </location>
</feature>
<feature type="transmembrane region" description="Helical" evidence="2">
    <location>
        <begin position="276"/>
        <end position="296"/>
    </location>
</feature>
<feature type="transmembrane region" description="Helical" evidence="2">
    <location>
        <begin position="310"/>
        <end position="330"/>
    </location>
</feature>
<keyword id="KW-0256">Endoplasmic reticulum</keyword>
<keyword id="KW-0333">Golgi apparatus</keyword>
<keyword id="KW-0472">Membrane</keyword>
<keyword id="KW-0474">Menaquinone biosynthesis</keyword>
<keyword id="KW-0637">Prenyltransferase</keyword>
<keyword id="KW-1185">Reference proteome</keyword>
<keyword id="KW-0808">Transferase</keyword>
<keyword id="KW-0812">Transmembrane</keyword>
<keyword id="KW-1133">Transmembrane helix</keyword>
<name>UBIA1_DICDI</name>
<comment type="function">
    <text evidence="1">Prenyltransferase that mediates the formation of menaquinone-4 (MK-4), a vitamin K2 isoform.</text>
</comment>
<comment type="catalytic activity">
    <reaction evidence="1">
        <text>menadiol + (2E,6E,10E)-geranylgeranyl diphosphate = menaquinol-4 + diphosphate</text>
        <dbReference type="Rhea" id="RHEA:74083"/>
        <dbReference type="ChEBI" id="CHEBI:6746"/>
        <dbReference type="ChEBI" id="CHEBI:33019"/>
        <dbReference type="ChEBI" id="CHEBI:58756"/>
        <dbReference type="ChEBI" id="CHEBI:193091"/>
    </reaction>
    <physiologicalReaction direction="left-to-right" evidence="1">
        <dbReference type="Rhea" id="RHEA:74084"/>
    </physiologicalReaction>
</comment>
<comment type="pathway">
    <text evidence="1">Quinol/quinone metabolism; menaquinone biosynthesis.</text>
</comment>
<comment type="subcellular location">
    <subcellularLocation>
        <location evidence="1">Endoplasmic reticulum membrane</location>
        <topology evidence="2">Multi-pass membrane protein</topology>
    </subcellularLocation>
    <subcellularLocation>
        <location evidence="1">Golgi apparatus membrane</location>
        <topology evidence="2">Multi-pass membrane protein</topology>
    </subcellularLocation>
</comment>
<comment type="similarity">
    <text evidence="3">Belongs to the UbiA prenyltransferase family.</text>
</comment>
<accession>Q54K99</accession>
<sequence>MSTTINRNEKTKQVVNKTKEIKTESSQQQQQKPPISKLMGIILATRPWSLTISVTSVLVGSALAFREIREFDSIMLSIILVGAVSLQALGNVVNSFYDCKNGNDTKEKSADRTMFDFGLTEGNIINLIWYLLIQCAICLGLMIFRMDNIKCIVENILPLGAFGFILNISYTAAPIGLKYIGLGDLTIFLCFGPILVQSAFISQTHYHDSLAYFYSIPLALTIVAVLHVNNTRDIKADTEAGSITLASKLGFKNCYYIYAGLYLFAYIYLFKLSLDIDKYILNLPLILIPKIISLINQFKNKKLEDLTEKTGQLSFFFGGLNAIGVLLSMQ</sequence>
<reference key="1">
    <citation type="journal article" date="2005" name="Nature">
        <title>The genome of the social amoeba Dictyostelium discoideum.</title>
        <authorList>
            <person name="Eichinger L."/>
            <person name="Pachebat J.A."/>
            <person name="Gloeckner G."/>
            <person name="Rajandream M.A."/>
            <person name="Sucgang R."/>
            <person name="Berriman M."/>
            <person name="Song J."/>
            <person name="Olsen R."/>
            <person name="Szafranski K."/>
            <person name="Xu Q."/>
            <person name="Tunggal B."/>
            <person name="Kummerfeld S."/>
            <person name="Madera M."/>
            <person name="Konfortov B.A."/>
            <person name="Rivero F."/>
            <person name="Bankier A.T."/>
            <person name="Lehmann R."/>
            <person name="Hamlin N."/>
            <person name="Davies R."/>
            <person name="Gaudet P."/>
            <person name="Fey P."/>
            <person name="Pilcher K."/>
            <person name="Chen G."/>
            <person name="Saunders D."/>
            <person name="Sodergren E.J."/>
            <person name="Davis P."/>
            <person name="Kerhornou A."/>
            <person name="Nie X."/>
            <person name="Hall N."/>
            <person name="Anjard C."/>
            <person name="Hemphill L."/>
            <person name="Bason N."/>
            <person name="Farbrother P."/>
            <person name="Desany B."/>
            <person name="Just E."/>
            <person name="Morio T."/>
            <person name="Rost R."/>
            <person name="Churcher C.M."/>
            <person name="Cooper J."/>
            <person name="Haydock S."/>
            <person name="van Driessche N."/>
            <person name="Cronin A."/>
            <person name="Goodhead I."/>
            <person name="Muzny D.M."/>
            <person name="Mourier T."/>
            <person name="Pain A."/>
            <person name="Lu M."/>
            <person name="Harper D."/>
            <person name="Lindsay R."/>
            <person name="Hauser H."/>
            <person name="James K.D."/>
            <person name="Quiles M."/>
            <person name="Madan Babu M."/>
            <person name="Saito T."/>
            <person name="Buchrieser C."/>
            <person name="Wardroper A."/>
            <person name="Felder M."/>
            <person name="Thangavelu M."/>
            <person name="Johnson D."/>
            <person name="Knights A."/>
            <person name="Loulseged H."/>
            <person name="Mungall K.L."/>
            <person name="Oliver K."/>
            <person name="Price C."/>
            <person name="Quail M.A."/>
            <person name="Urushihara H."/>
            <person name="Hernandez J."/>
            <person name="Rabbinowitsch E."/>
            <person name="Steffen D."/>
            <person name="Sanders M."/>
            <person name="Ma J."/>
            <person name="Kohara Y."/>
            <person name="Sharp S."/>
            <person name="Simmonds M.N."/>
            <person name="Spiegler S."/>
            <person name="Tivey A."/>
            <person name="Sugano S."/>
            <person name="White B."/>
            <person name="Walker D."/>
            <person name="Woodward J.R."/>
            <person name="Winckler T."/>
            <person name="Tanaka Y."/>
            <person name="Shaulsky G."/>
            <person name="Schleicher M."/>
            <person name="Weinstock G.M."/>
            <person name="Rosenthal A."/>
            <person name="Cox E.C."/>
            <person name="Chisholm R.L."/>
            <person name="Gibbs R.A."/>
            <person name="Loomis W.F."/>
            <person name="Platzer M."/>
            <person name="Kay R.R."/>
            <person name="Williams J.G."/>
            <person name="Dear P.H."/>
            <person name="Noegel A.A."/>
            <person name="Barrell B.G."/>
            <person name="Kuspa A."/>
        </authorList>
    </citation>
    <scope>NUCLEOTIDE SEQUENCE [LARGE SCALE GENOMIC DNA]</scope>
    <source>
        <strain>AX4</strain>
    </source>
</reference>